<keyword id="KW-0002">3D-structure</keyword>
<keyword id="KW-0028">Amino-acid biosynthesis</keyword>
<keyword id="KW-0368">Histidine biosynthesis</keyword>
<keyword id="KW-0378">Hydrolase</keyword>
<keyword id="KW-1185">Reference proteome</keyword>
<gene>
    <name type="primary">hisK</name>
    <name type="ordered locus">LL1216</name>
    <name type="ORF">L37351</name>
</gene>
<proteinExistence type="evidence at protein level"/>
<name>HIS9_LACLA</name>
<comment type="catalytic activity">
    <reaction>
        <text>L-histidinol phosphate + H2O = L-histidinol + phosphate</text>
        <dbReference type="Rhea" id="RHEA:14465"/>
        <dbReference type="ChEBI" id="CHEBI:15377"/>
        <dbReference type="ChEBI" id="CHEBI:43474"/>
        <dbReference type="ChEBI" id="CHEBI:57699"/>
        <dbReference type="ChEBI" id="CHEBI:57980"/>
        <dbReference type="EC" id="3.1.3.15"/>
    </reaction>
</comment>
<comment type="pathway">
    <text>Amino-acid biosynthesis; L-histidine biosynthesis; L-histidine from 5-phospho-alpha-D-ribose 1-diphosphate: step 8/9.</text>
</comment>
<comment type="similarity">
    <text evidence="1">Belongs to the PHP hydrolase family. HisK subfamily.</text>
</comment>
<accession>Q02150</accession>
<accession>Q9CG89</accession>
<feature type="chain" id="PRO_0000122319" description="Histidinol-phosphatase">
    <location>
        <begin position="1"/>
        <end position="269"/>
    </location>
</feature>
<feature type="sequence conflict" description="In Ref. 1; AAB81911." evidence="1" ref="1">
    <original>T</original>
    <variation>I</variation>
    <location>
        <position position="25"/>
    </location>
</feature>
<feature type="sequence conflict" description="In Ref. 1; AAB81911." evidence="1" ref="1">
    <original>H</original>
    <variation>Y</variation>
    <location>
        <position position="30"/>
    </location>
</feature>
<feature type="sequence conflict" description="In Ref. 1; AAB81911." evidence="1" ref="1">
    <original>KIK</original>
    <variation>EIN</variation>
    <location>
        <begin position="71"/>
        <end position="73"/>
    </location>
</feature>
<feature type="sequence conflict" description="In Ref. 1; AAB81911." evidence="1" ref="1">
    <original>I</original>
    <variation>T</variation>
    <location>
        <position position="125"/>
    </location>
</feature>
<feature type="sequence conflict" description="In Ref. 1; AAB81911." evidence="1" ref="1">
    <original>N</original>
    <variation>T</variation>
    <location>
        <position position="146"/>
    </location>
</feature>
<feature type="sequence conflict" description="In Ref. 1; AAB81911." evidence="1" ref="1">
    <original>K</original>
    <variation>T</variation>
    <location>
        <position position="168"/>
    </location>
</feature>
<feature type="sequence conflict" description="In Ref. 1; AAB81911." evidence="1" ref="1">
    <original>E</original>
    <variation>G</variation>
    <location>
        <position position="187"/>
    </location>
</feature>
<feature type="sequence conflict" description="In Ref. 1; AAB81911." evidence="1" ref="1">
    <original>E</original>
    <variation>G</variation>
    <location>
        <position position="203"/>
    </location>
</feature>
<feature type="sequence conflict" description="In Ref. 1; AAB81911." evidence="1" ref="1">
    <original>K</original>
    <variation>R</variation>
    <location>
        <position position="215"/>
    </location>
</feature>
<feature type="sequence conflict" description="In Ref. 1; AAB81911." evidence="1" ref="1">
    <original>H</original>
    <variation>R</variation>
    <location>
        <position position="250"/>
    </location>
</feature>
<feature type="helix" evidence="2">
    <location>
        <begin position="20"/>
        <end position="29"/>
    </location>
</feature>
<feature type="strand" evidence="2">
    <location>
        <begin position="33"/>
        <end position="42"/>
    </location>
</feature>
<feature type="helix" evidence="2">
    <location>
        <begin position="54"/>
        <end position="67"/>
    </location>
</feature>
<feature type="turn" evidence="2">
    <location>
        <begin position="68"/>
        <end position="71"/>
    </location>
</feature>
<feature type="strand" evidence="2">
    <location>
        <begin position="73"/>
        <end position="81"/>
    </location>
</feature>
<feature type="helix" evidence="2">
    <location>
        <begin position="84"/>
        <end position="86"/>
    </location>
</feature>
<feature type="helix" evidence="2">
    <location>
        <begin position="87"/>
        <end position="94"/>
    </location>
</feature>
<feature type="strand" evidence="2">
    <location>
        <begin position="100"/>
        <end position="105"/>
    </location>
</feature>
<feature type="helix" evidence="2">
    <location>
        <begin position="119"/>
        <end position="121"/>
    </location>
</feature>
<feature type="helix" evidence="2">
    <location>
        <begin position="126"/>
        <end position="143"/>
    </location>
</feature>
<feature type="strand" evidence="2">
    <location>
        <begin position="148"/>
        <end position="150"/>
    </location>
</feature>
<feature type="helix" evidence="2">
    <location>
        <begin position="155"/>
        <end position="158"/>
    </location>
</feature>
<feature type="strand" evidence="3">
    <location>
        <begin position="159"/>
        <end position="161"/>
    </location>
</feature>
<feature type="helix" evidence="2">
    <location>
        <begin position="170"/>
        <end position="172"/>
    </location>
</feature>
<feature type="helix" evidence="2">
    <location>
        <begin position="173"/>
        <end position="185"/>
    </location>
</feature>
<feature type="strand" evidence="2">
    <location>
        <begin position="189"/>
        <end position="193"/>
    </location>
</feature>
<feature type="turn" evidence="2">
    <location>
        <begin position="195"/>
        <end position="198"/>
    </location>
</feature>
<feature type="helix" evidence="2">
    <location>
        <begin position="200"/>
        <end position="215"/>
    </location>
</feature>
<feature type="strand" evidence="2">
    <location>
        <begin position="220"/>
        <end position="224"/>
    </location>
</feature>
<feature type="strand" evidence="2">
    <location>
        <begin position="228"/>
        <end position="230"/>
    </location>
</feature>
<feature type="helix" evidence="2">
    <location>
        <begin position="234"/>
        <end position="246"/>
    </location>
</feature>
<evidence type="ECO:0000305" key="1"/>
<evidence type="ECO:0007829" key="2">
    <source>
        <dbReference type="PDB" id="4GC3"/>
    </source>
</evidence>
<evidence type="ECO:0007829" key="3">
    <source>
        <dbReference type="PDB" id="4GYF"/>
    </source>
</evidence>
<reference key="1">
    <citation type="journal article" date="1992" name="J. Bacteriol.">
        <title>Histidine biosynthesis genes in Lactococcus lactis subsp. lactis.</title>
        <authorList>
            <person name="Delorme C."/>
            <person name="Ehrlich S.D."/>
            <person name="Renault P."/>
        </authorList>
    </citation>
    <scope>NUCLEOTIDE SEQUENCE [GENOMIC DNA]</scope>
    <source>
        <strain>NCDO 2118</strain>
    </source>
</reference>
<reference key="2">
    <citation type="journal article" date="2001" name="Genome Res.">
        <title>The complete genome sequence of the lactic acid bacterium Lactococcus lactis ssp. lactis IL1403.</title>
        <authorList>
            <person name="Bolotin A."/>
            <person name="Wincker P."/>
            <person name="Mauger S."/>
            <person name="Jaillon O."/>
            <person name="Malarme K."/>
            <person name="Weissenbach J."/>
            <person name="Ehrlich S.D."/>
            <person name="Sorokin A."/>
        </authorList>
    </citation>
    <scope>NUCLEOTIDE SEQUENCE [LARGE SCALE GENOMIC DNA]</scope>
    <source>
        <strain>IL1403</strain>
    </source>
</reference>
<protein>
    <recommendedName>
        <fullName>Histidinol-phosphatase</fullName>
        <shortName>HolPase</shortName>
        <ecNumber>3.1.3.15</ecNumber>
    </recommendedName>
</protein>
<organism>
    <name type="scientific">Lactococcus lactis subsp. lactis (strain IL1403)</name>
    <name type="common">Streptococcus lactis</name>
    <dbReference type="NCBI Taxonomy" id="272623"/>
    <lineage>
        <taxon>Bacteria</taxon>
        <taxon>Bacillati</taxon>
        <taxon>Bacillota</taxon>
        <taxon>Bacilli</taxon>
        <taxon>Lactobacillales</taxon>
        <taxon>Streptococcaceae</taxon>
        <taxon>Lactococcus</taxon>
    </lineage>
</organism>
<dbReference type="EC" id="3.1.3.15"/>
<dbReference type="EMBL" id="U92974">
    <property type="protein sequence ID" value="AAB81911.1"/>
    <property type="molecule type" value="Genomic_DNA"/>
</dbReference>
<dbReference type="EMBL" id="AE005176">
    <property type="protein sequence ID" value="AAK05314.1"/>
    <property type="molecule type" value="Genomic_DNA"/>
</dbReference>
<dbReference type="PIR" id="D47754">
    <property type="entry name" value="D47754"/>
</dbReference>
<dbReference type="PIR" id="H86776">
    <property type="entry name" value="H86776"/>
</dbReference>
<dbReference type="RefSeq" id="NP_267372.1">
    <property type="nucleotide sequence ID" value="NC_002662.1"/>
</dbReference>
<dbReference type="RefSeq" id="WP_003131121.1">
    <property type="nucleotide sequence ID" value="NC_002662.1"/>
</dbReference>
<dbReference type="PDB" id="4GC3">
    <property type="method" value="X-ray"/>
    <property type="resolution" value="1.32 A"/>
    <property type="chains" value="A=2-269"/>
</dbReference>
<dbReference type="PDB" id="4GK8">
    <property type="method" value="X-ray"/>
    <property type="resolution" value="1.93 A"/>
    <property type="chains" value="A=2-269"/>
</dbReference>
<dbReference type="PDB" id="4GYF">
    <property type="method" value="X-ray"/>
    <property type="resolution" value="1.65 A"/>
    <property type="chains" value="A=2-269"/>
</dbReference>
<dbReference type="PDBsum" id="4GC3"/>
<dbReference type="PDBsum" id="4GK8"/>
<dbReference type="PDBsum" id="4GYF"/>
<dbReference type="SMR" id="Q02150"/>
<dbReference type="PaxDb" id="272623-L37351"/>
<dbReference type="EnsemblBacteria" id="AAK05314">
    <property type="protein sequence ID" value="AAK05314"/>
    <property type="gene ID" value="L37351"/>
</dbReference>
<dbReference type="KEGG" id="lla:L37351"/>
<dbReference type="PATRIC" id="fig|272623.7.peg.1313"/>
<dbReference type="eggNOG" id="COG1387">
    <property type="taxonomic scope" value="Bacteria"/>
</dbReference>
<dbReference type="HOGENOM" id="CLU_054611_3_0_9"/>
<dbReference type="OrthoDB" id="9775255at2"/>
<dbReference type="BRENDA" id="3.1.3.15">
    <property type="organism ID" value="2864"/>
</dbReference>
<dbReference type="UniPathway" id="UPA00031">
    <property type="reaction ID" value="UER00013"/>
</dbReference>
<dbReference type="EvolutionaryTrace" id="Q02150"/>
<dbReference type="Proteomes" id="UP000002196">
    <property type="component" value="Chromosome"/>
</dbReference>
<dbReference type="GO" id="GO:0005737">
    <property type="term" value="C:cytoplasm"/>
    <property type="evidence" value="ECO:0007669"/>
    <property type="project" value="TreeGrafter"/>
</dbReference>
<dbReference type="GO" id="GO:0004401">
    <property type="term" value="F:histidinol-phosphatase activity"/>
    <property type="evidence" value="ECO:0007669"/>
    <property type="project" value="UniProtKB-EC"/>
</dbReference>
<dbReference type="GO" id="GO:0000105">
    <property type="term" value="P:L-histidine biosynthetic process"/>
    <property type="evidence" value="ECO:0007669"/>
    <property type="project" value="UniProtKB-UniPathway"/>
</dbReference>
<dbReference type="Gene3D" id="3.20.20.140">
    <property type="entry name" value="Metal-dependent hydrolases"/>
    <property type="match status" value="1"/>
</dbReference>
<dbReference type="InterPro" id="IPR010140">
    <property type="entry name" value="Histidinol_P_phosphatase_HisJ"/>
</dbReference>
<dbReference type="InterPro" id="IPR004013">
    <property type="entry name" value="PHP_dom"/>
</dbReference>
<dbReference type="InterPro" id="IPR003141">
    <property type="entry name" value="Pol/His_phosphatase_N"/>
</dbReference>
<dbReference type="InterPro" id="IPR016195">
    <property type="entry name" value="Pol/histidinol_Pase-like"/>
</dbReference>
<dbReference type="NCBIfam" id="TIGR01856">
    <property type="entry name" value="hisJ_fam"/>
    <property type="match status" value="1"/>
</dbReference>
<dbReference type="PANTHER" id="PTHR21039">
    <property type="entry name" value="HISTIDINOL PHOSPHATASE-RELATED"/>
    <property type="match status" value="1"/>
</dbReference>
<dbReference type="PANTHER" id="PTHR21039:SF0">
    <property type="entry name" value="HISTIDINOL-PHOSPHATASE"/>
    <property type="match status" value="1"/>
</dbReference>
<dbReference type="Pfam" id="PF02811">
    <property type="entry name" value="PHP"/>
    <property type="match status" value="1"/>
</dbReference>
<dbReference type="SMART" id="SM00481">
    <property type="entry name" value="POLIIIAc"/>
    <property type="match status" value="1"/>
</dbReference>
<dbReference type="SUPFAM" id="SSF89550">
    <property type="entry name" value="PHP domain-like"/>
    <property type="match status" value="1"/>
</dbReference>
<sequence>MKKLDYHFHSHFSADSEELPRKHVTEAIAHGLEEICFTEHRDFYFPGMDFSLNLPEYFQEINRLQAEFKDKIKIKIGLEMGIDLRFKSEINQFIDSAPFDFVIASVHEIGDIEVYDGTEFYLQKIKEEAQREYLLACLDVVQNFENYNSFGHLDYVARYGPYTDKSIKFAENREILFEILRALASKEKALEINTRLFDDPKTEQFYSDLLINFKKLGGKFITLGTDSHIAKRDWLSIHKARTLIKKAGFHELATFSGMKIDKNKKSIKE</sequence>